<keyword id="KW-0238">DNA-binding</keyword>
<keyword id="KW-1017">Isopeptide bond</keyword>
<keyword id="KW-1185">Reference proteome</keyword>
<keyword id="KW-0677">Repeat</keyword>
<keyword id="KW-0804">Transcription</keyword>
<keyword id="KW-0805">Transcription regulation</keyword>
<keyword id="KW-0832">Ubl conjugation</keyword>
<comment type="function">
    <text evidence="1">General factor that plays a role in the activation of archaeal genes transcribed by RNA polymerase. Binds specifically to the TATA box promoter element which lies close to the position of transcription initiation (By similarity).</text>
</comment>
<comment type="similarity">
    <text evidence="2">Belongs to the TBP family.</text>
</comment>
<dbReference type="EMBL" id="CP001956">
    <property type="protein sequence ID" value="ADE04912.1"/>
    <property type="molecule type" value="Genomic_DNA"/>
</dbReference>
<dbReference type="RefSeq" id="WP_004041616.1">
    <property type="nucleotide sequence ID" value="NZ_AOHU01000030.1"/>
</dbReference>
<dbReference type="SMR" id="D4H071"/>
<dbReference type="STRING" id="309800.HVO_1727"/>
<dbReference type="PaxDb" id="309800-C498_03989"/>
<dbReference type="EnsemblBacteria" id="ADE04912">
    <property type="protein sequence ID" value="ADE04912"/>
    <property type="gene ID" value="HVO_1727"/>
</dbReference>
<dbReference type="GeneID" id="8924973"/>
<dbReference type="KEGG" id="hvo:HVO_1727"/>
<dbReference type="eggNOG" id="arCOG01764">
    <property type="taxonomic scope" value="Archaea"/>
</dbReference>
<dbReference type="HOGENOM" id="CLU_060161_4_3_2"/>
<dbReference type="OrthoDB" id="350539at2157"/>
<dbReference type="Proteomes" id="UP000008243">
    <property type="component" value="Chromosome"/>
</dbReference>
<dbReference type="GO" id="GO:0003677">
    <property type="term" value="F:DNA binding"/>
    <property type="evidence" value="ECO:0007669"/>
    <property type="project" value="UniProtKB-KW"/>
</dbReference>
<dbReference type="GO" id="GO:0003700">
    <property type="term" value="F:DNA-binding transcription factor activity"/>
    <property type="evidence" value="ECO:0007669"/>
    <property type="project" value="UniProtKB-UniRule"/>
</dbReference>
<dbReference type="GO" id="GO:0006352">
    <property type="term" value="P:DNA-templated transcription initiation"/>
    <property type="evidence" value="ECO:0007669"/>
    <property type="project" value="InterPro"/>
</dbReference>
<dbReference type="CDD" id="cd04518">
    <property type="entry name" value="TBP_archaea"/>
    <property type="match status" value="1"/>
</dbReference>
<dbReference type="FunFam" id="3.30.310.10:FF:000007">
    <property type="entry name" value="TATA-box-binding protein"/>
    <property type="match status" value="1"/>
</dbReference>
<dbReference type="FunFam" id="3.30.310.10:FF:000010">
    <property type="entry name" value="TATA-box-binding protein"/>
    <property type="match status" value="1"/>
</dbReference>
<dbReference type="Gene3D" id="3.30.310.10">
    <property type="entry name" value="TATA-Binding Protein"/>
    <property type="match status" value="2"/>
</dbReference>
<dbReference type="HAMAP" id="MF_00408">
    <property type="entry name" value="TATA_bind_prot_arch"/>
    <property type="match status" value="1"/>
</dbReference>
<dbReference type="InterPro" id="IPR000814">
    <property type="entry name" value="TBP"/>
</dbReference>
<dbReference type="InterPro" id="IPR033711">
    <property type="entry name" value="TBP_archaea"/>
</dbReference>
<dbReference type="InterPro" id="IPR030491">
    <property type="entry name" value="TBP_CS"/>
</dbReference>
<dbReference type="InterPro" id="IPR012295">
    <property type="entry name" value="TBP_dom_sf"/>
</dbReference>
<dbReference type="NCBIfam" id="NF001593">
    <property type="entry name" value="PRK00394.1-2"/>
    <property type="match status" value="1"/>
</dbReference>
<dbReference type="NCBIfam" id="NF001595">
    <property type="entry name" value="PRK00394.1-5"/>
    <property type="match status" value="1"/>
</dbReference>
<dbReference type="NCBIfam" id="NF001597">
    <property type="entry name" value="PRK00394.2-2"/>
    <property type="match status" value="1"/>
</dbReference>
<dbReference type="PANTHER" id="PTHR10126">
    <property type="entry name" value="TATA-BOX BINDING PROTEIN"/>
    <property type="match status" value="1"/>
</dbReference>
<dbReference type="Pfam" id="PF00352">
    <property type="entry name" value="TBP"/>
    <property type="match status" value="2"/>
</dbReference>
<dbReference type="PRINTS" id="PR00686">
    <property type="entry name" value="TIFACTORIID"/>
</dbReference>
<dbReference type="SUPFAM" id="SSF55945">
    <property type="entry name" value="TATA-box binding protein-like"/>
    <property type="match status" value="2"/>
</dbReference>
<dbReference type="PROSITE" id="PS00351">
    <property type="entry name" value="TFIID"/>
    <property type="match status" value="1"/>
</dbReference>
<evidence type="ECO:0000250" key="1"/>
<evidence type="ECO:0000305" key="2"/>
<reference key="1">
    <citation type="journal article" date="2010" name="PLoS ONE">
        <title>The complete genome sequence of Haloferax volcanii DS2, a model archaeon.</title>
        <authorList>
            <person name="Hartman A.L."/>
            <person name="Norais C."/>
            <person name="Badger J.H."/>
            <person name="Delmas S."/>
            <person name="Haldenby S."/>
            <person name="Madupu R."/>
            <person name="Robinson J."/>
            <person name="Khouri H."/>
            <person name="Ren Q."/>
            <person name="Lowe T.M."/>
            <person name="Maupin-Furlow J."/>
            <person name="Pohlschroder M."/>
            <person name="Daniels C."/>
            <person name="Pfeiffer F."/>
            <person name="Allers T."/>
            <person name="Eisen J.A."/>
        </authorList>
    </citation>
    <scope>NUCLEOTIDE SEQUENCE [LARGE SCALE GENOMIC DNA]</scope>
    <source>
        <strain>ATCC 29605 / DSM 3757 / JCM 8879 / NBRC 14742 / NCIMB 2012 / VKM B-1768 / DS2</strain>
    </source>
</reference>
<reference key="2">
    <citation type="journal article" date="2010" name="Nature">
        <title>Ubiquitin-like small archaeal modifier proteins (SAMPs) in Haloferax volcanii.</title>
        <authorList>
            <person name="Humbard M.A."/>
            <person name="Miranda H.V."/>
            <person name="Lim J.M."/>
            <person name="Krause D.J."/>
            <person name="Pritz J.R."/>
            <person name="Zhou G."/>
            <person name="Chen S."/>
            <person name="Wells L."/>
            <person name="Maupin-Furlow J.A."/>
        </authorList>
    </citation>
    <scope>SAMPYLATION AT LYS-53 AND LYS-63</scope>
    <scope>IDENTIFICATION BY MASS SPECTROMETRY</scope>
</reference>
<protein>
    <recommendedName>
        <fullName>TATA-box-binding protein 2</fullName>
    </recommendedName>
    <alternativeName>
        <fullName>Box A-binding protein 2</fullName>
        <shortName>BAP 2</shortName>
    </alternativeName>
    <alternativeName>
        <fullName>TATA sequence-binding protein 2</fullName>
        <shortName>TBP 2</shortName>
    </alternativeName>
    <alternativeName>
        <fullName>TATA-box factor 2</fullName>
    </alternativeName>
</protein>
<accession>D4H071</accession>
<sequence length="186" mass="19882">MSGPADSIEIQNVVASTGIGQELDLEALADDLPGADFNPDNFPGLVYRTQDPKAAALIFRSGKIVCTGAKSIDDVHDALGIIFDKLRELKIPVDDEPEITVQNIVSSADLGHNLNLNALAIGLGLEDVEYEPEQFPGLVYRMDEPKVVILLFGSGKIVITGGKRTDDAETAVEEIVERIDALGLLG</sequence>
<proteinExistence type="evidence at protein level"/>
<feature type="chain" id="PRO_0000397111" description="TATA-box-binding protein 2">
    <location>
        <begin position="1"/>
        <end position="186"/>
    </location>
</feature>
<feature type="repeat" description="1">
    <location>
        <begin position="10"/>
        <end position="86"/>
    </location>
</feature>
<feature type="repeat" description="2">
    <location>
        <begin position="101"/>
        <end position="179"/>
    </location>
</feature>
<feature type="cross-link" description="Glycyl lysine isopeptide (Lys-Gly) (interchain with G-Cter in SAMP2)">
    <location>
        <position position="53"/>
    </location>
</feature>
<feature type="cross-link" description="Glycyl lysine isopeptide (Lys-Gly) (interchain with G-Cter in SAMP2)">
    <location>
        <position position="63"/>
    </location>
</feature>
<organism>
    <name type="scientific">Haloferax volcanii (strain ATCC 29605 / DSM 3757 / JCM 8879 / NBRC 14742 / NCIMB 2012 / VKM B-1768 / DS2)</name>
    <name type="common">Halobacterium volcanii</name>
    <dbReference type="NCBI Taxonomy" id="309800"/>
    <lineage>
        <taxon>Archaea</taxon>
        <taxon>Methanobacteriati</taxon>
        <taxon>Methanobacteriota</taxon>
        <taxon>Stenosarchaea group</taxon>
        <taxon>Halobacteria</taxon>
        <taxon>Halobacteriales</taxon>
        <taxon>Haloferacaceae</taxon>
        <taxon>Haloferax</taxon>
    </lineage>
</organism>
<name>TBP2_HALVD</name>
<gene>
    <name type="primary">tbp2</name>
    <name type="ordered locus">HVO_1727</name>
</gene>